<dbReference type="EMBL" id="CP001127">
    <property type="protein sequence ID" value="ACF92563.1"/>
    <property type="molecule type" value="Genomic_DNA"/>
</dbReference>
<dbReference type="RefSeq" id="WP_000115874.1">
    <property type="nucleotide sequence ID" value="NC_011094.1"/>
</dbReference>
<dbReference type="SMR" id="B4TVS2"/>
<dbReference type="KEGG" id="sew:SeSA_A3376"/>
<dbReference type="HOGENOM" id="CLU_015114_1_3_6"/>
<dbReference type="Proteomes" id="UP000001865">
    <property type="component" value="Chromosome"/>
</dbReference>
<dbReference type="GO" id="GO:0005886">
    <property type="term" value="C:plasma membrane"/>
    <property type="evidence" value="ECO:0007669"/>
    <property type="project" value="UniProtKB-SubCell"/>
</dbReference>
<dbReference type="GO" id="GO:0046872">
    <property type="term" value="F:metal ion binding"/>
    <property type="evidence" value="ECO:0007669"/>
    <property type="project" value="UniProtKB-KW"/>
</dbReference>
<dbReference type="GO" id="GO:0005385">
    <property type="term" value="F:zinc ion transmembrane transporter activity"/>
    <property type="evidence" value="ECO:0007669"/>
    <property type="project" value="UniProtKB-UniRule"/>
</dbReference>
<dbReference type="HAMAP" id="MF_00548">
    <property type="entry name" value="ZupT"/>
    <property type="match status" value="1"/>
</dbReference>
<dbReference type="InterPro" id="IPR003689">
    <property type="entry name" value="ZIP"/>
</dbReference>
<dbReference type="InterPro" id="IPR023498">
    <property type="entry name" value="Zn_transptr_ZupT"/>
</dbReference>
<dbReference type="NCBIfam" id="NF003243">
    <property type="entry name" value="PRK04201.1"/>
    <property type="match status" value="1"/>
</dbReference>
<dbReference type="PANTHER" id="PTHR11040:SF205">
    <property type="entry name" value="ZINC TRANSPORTER ZUPT"/>
    <property type="match status" value="1"/>
</dbReference>
<dbReference type="PANTHER" id="PTHR11040">
    <property type="entry name" value="ZINC/IRON TRANSPORTER"/>
    <property type="match status" value="1"/>
</dbReference>
<dbReference type="Pfam" id="PF02535">
    <property type="entry name" value="Zip"/>
    <property type="match status" value="2"/>
</dbReference>
<protein>
    <recommendedName>
        <fullName evidence="1">Zinc transporter ZupT</fullName>
    </recommendedName>
</protein>
<organism>
    <name type="scientific">Salmonella schwarzengrund (strain CVM19633)</name>
    <dbReference type="NCBI Taxonomy" id="439843"/>
    <lineage>
        <taxon>Bacteria</taxon>
        <taxon>Pseudomonadati</taxon>
        <taxon>Pseudomonadota</taxon>
        <taxon>Gammaproteobacteria</taxon>
        <taxon>Enterobacterales</taxon>
        <taxon>Enterobacteriaceae</taxon>
        <taxon>Salmonella</taxon>
    </lineage>
</organism>
<accession>B4TVS2</accession>
<comment type="function">
    <text evidence="1">Mediates zinc uptake. May also transport other divalent cations.</text>
</comment>
<comment type="catalytic activity">
    <reaction evidence="1">
        <text>Zn(2+)(in) = Zn(2+)(out)</text>
        <dbReference type="Rhea" id="RHEA:29351"/>
        <dbReference type="ChEBI" id="CHEBI:29105"/>
    </reaction>
</comment>
<comment type="subcellular location">
    <subcellularLocation>
        <location evidence="1">Cell inner membrane</location>
        <topology evidence="1">Multi-pass membrane protein</topology>
    </subcellularLocation>
</comment>
<comment type="similarity">
    <text evidence="1">Belongs to the ZIP transporter (TC 2.A.5) family. ZupT subfamily.</text>
</comment>
<sequence length="257" mass="26544">MSVPLILTLLAGAATFIGAFLGVLGQKPSNRVLAFSLGFAAGIMLLISLMEMLPAALDTEGMSPVLGYGMFIIGLLGYFGLDRLLPHAHPQDLVQKRQQPLPGSIKRTAILLTLGISLHNFPEGIATFVTASSNLELGFGIALAVALHNIPEGLAVAGPVYAATGSKRTAIFWAGISGMAEILGGVLAWLILGSLVSPIVMAAIMAAVAGIMVALSVDELMPLAKEIDPNNNPSYGVLCGMSIMGLSLVILQTIGIG</sequence>
<evidence type="ECO:0000255" key="1">
    <source>
        <dbReference type="HAMAP-Rule" id="MF_00548"/>
    </source>
</evidence>
<keyword id="KW-0997">Cell inner membrane</keyword>
<keyword id="KW-1003">Cell membrane</keyword>
<keyword id="KW-0406">Ion transport</keyword>
<keyword id="KW-0408">Iron</keyword>
<keyword id="KW-0472">Membrane</keyword>
<keyword id="KW-0479">Metal-binding</keyword>
<keyword id="KW-0812">Transmembrane</keyword>
<keyword id="KW-1133">Transmembrane helix</keyword>
<keyword id="KW-0813">Transport</keyword>
<keyword id="KW-0862">Zinc</keyword>
<keyword id="KW-0864">Zinc transport</keyword>
<gene>
    <name evidence="1" type="primary">zupT</name>
    <name type="ordered locus">SeSA_A3376</name>
</gene>
<name>ZUPT_SALSV</name>
<feature type="chain" id="PRO_1000128967" description="Zinc transporter ZupT">
    <location>
        <begin position="1"/>
        <end position="257"/>
    </location>
</feature>
<feature type="transmembrane region" description="Helical" evidence="1">
    <location>
        <begin position="5"/>
        <end position="25"/>
    </location>
</feature>
<feature type="transmembrane region" description="Helical" evidence="1">
    <location>
        <begin position="32"/>
        <end position="52"/>
    </location>
</feature>
<feature type="transmembrane region" description="Helical" evidence="1">
    <location>
        <begin position="61"/>
        <end position="81"/>
    </location>
</feature>
<feature type="transmembrane region" description="Helical" evidence="1">
    <location>
        <begin position="109"/>
        <end position="129"/>
    </location>
</feature>
<feature type="transmembrane region" description="Helical" evidence="1">
    <location>
        <begin position="137"/>
        <end position="157"/>
    </location>
</feature>
<feature type="transmembrane region" description="Helical" evidence="1">
    <location>
        <begin position="171"/>
        <end position="191"/>
    </location>
</feature>
<feature type="transmembrane region" description="Helical" evidence="1">
    <location>
        <begin position="195"/>
        <end position="215"/>
    </location>
</feature>
<feature type="transmembrane region" description="Helical" evidence="1">
    <location>
        <begin position="236"/>
        <end position="256"/>
    </location>
</feature>
<feature type="binding site" description="M2 metal binding site" evidence="1">
    <location>
        <position position="120"/>
    </location>
    <ligand>
        <name>Fe(2+)</name>
        <dbReference type="ChEBI" id="CHEBI:29033"/>
    </ligand>
</feature>
<feature type="binding site" description="M2 metal binding site" evidence="1">
    <location>
        <position position="123"/>
    </location>
    <ligand>
        <name>Fe(2+)</name>
        <dbReference type="ChEBI" id="CHEBI:29033"/>
    </ligand>
</feature>
<feature type="binding site" description="M1 metal binding site" evidence="1">
    <location>
        <position position="123"/>
    </location>
    <ligand>
        <name>Zn(2+)</name>
        <dbReference type="ChEBI" id="CHEBI:29105"/>
    </ligand>
</feature>
<feature type="binding site" description="M1 metal binding site" evidence="1">
    <location>
        <position position="148"/>
    </location>
    <ligand>
        <name>Zn(2+)</name>
        <dbReference type="ChEBI" id="CHEBI:29105"/>
    </ligand>
</feature>
<feature type="binding site" description="M2 metal binding site" evidence="1">
    <location>
        <position position="149"/>
    </location>
    <ligand>
        <name>Fe(2+)</name>
        <dbReference type="ChEBI" id="CHEBI:29033"/>
    </ligand>
</feature>
<feature type="binding site" description="M2 metal binding site" evidence="1">
    <location>
        <position position="152"/>
    </location>
    <ligand>
        <name>Fe(2+)</name>
        <dbReference type="ChEBI" id="CHEBI:29033"/>
    </ligand>
</feature>
<feature type="binding site" description="M1 metal binding site" evidence="1">
    <location>
        <position position="152"/>
    </location>
    <ligand>
        <name>Zn(2+)</name>
        <dbReference type="ChEBI" id="CHEBI:29105"/>
    </ligand>
</feature>
<feature type="binding site" description="M2 metal binding site" evidence="1">
    <location>
        <position position="181"/>
    </location>
    <ligand>
        <name>Fe(2+)</name>
        <dbReference type="ChEBI" id="CHEBI:29033"/>
    </ligand>
</feature>
<proteinExistence type="inferred from homology"/>
<reference key="1">
    <citation type="journal article" date="2011" name="J. Bacteriol.">
        <title>Comparative genomics of 28 Salmonella enterica isolates: evidence for CRISPR-mediated adaptive sublineage evolution.</title>
        <authorList>
            <person name="Fricke W.F."/>
            <person name="Mammel M.K."/>
            <person name="McDermott P.F."/>
            <person name="Tartera C."/>
            <person name="White D.G."/>
            <person name="Leclerc J.E."/>
            <person name="Ravel J."/>
            <person name="Cebula T.A."/>
        </authorList>
    </citation>
    <scope>NUCLEOTIDE SEQUENCE [LARGE SCALE GENOMIC DNA]</scope>
    <source>
        <strain>CVM19633</strain>
    </source>
</reference>